<reference key="1">
    <citation type="submission" date="2005-11" db="EMBL/GenBank/DDBJ databases">
        <authorList>
            <consortium name="NIH - Xenopus Gene Collection (XGC) project"/>
        </authorList>
    </citation>
    <scope>NUCLEOTIDE SEQUENCE [LARGE SCALE MRNA]</scope>
    <source>
        <tissue>Embryo</tissue>
        <tissue>Kidney</tissue>
    </source>
</reference>
<accession>Q5U4I3</accession>
<accession>Q32N47</accession>
<protein>
    <recommendedName>
        <fullName>Cyclin-D1-binding protein 1 homolog</fullName>
    </recommendedName>
</protein>
<organism>
    <name type="scientific">Xenopus laevis</name>
    <name type="common">African clawed frog</name>
    <dbReference type="NCBI Taxonomy" id="8355"/>
    <lineage>
        <taxon>Eukaryota</taxon>
        <taxon>Metazoa</taxon>
        <taxon>Chordata</taxon>
        <taxon>Craniata</taxon>
        <taxon>Vertebrata</taxon>
        <taxon>Euteleostomi</taxon>
        <taxon>Amphibia</taxon>
        <taxon>Batrachia</taxon>
        <taxon>Anura</taxon>
        <taxon>Pipoidea</taxon>
        <taxon>Pipidae</taxon>
        <taxon>Xenopodinae</taxon>
        <taxon>Xenopus</taxon>
        <taxon>Xenopus</taxon>
    </lineage>
</organism>
<comment type="function">
    <text evidence="1">May negatively regulate cell cycle progression.</text>
</comment>
<comment type="subcellular location">
    <subcellularLocation>
        <location evidence="1">Cytoplasm</location>
    </subcellularLocation>
    <subcellularLocation>
        <location evidence="1">Nucleus</location>
    </subcellularLocation>
</comment>
<comment type="similarity">
    <text evidence="3">Belongs to the CCNDBP1 family.</text>
</comment>
<comment type="sequence caution" evidence="3">
    <conflict type="erroneous initiation">
        <sequence resource="EMBL-CDS" id="AAH85082"/>
    </conflict>
</comment>
<feature type="chain" id="PRO_0000323378" description="Cyclin-D1-binding protein 1 homolog">
    <location>
        <begin position="1"/>
        <end position="331"/>
    </location>
</feature>
<feature type="region of interest" description="Disordered" evidence="2">
    <location>
        <begin position="175"/>
        <end position="197"/>
    </location>
</feature>
<feature type="compositionally biased region" description="Acidic residues" evidence="2">
    <location>
        <begin position="175"/>
        <end position="192"/>
    </location>
</feature>
<proteinExistence type="evidence at transcript level"/>
<sequence>MEPIRNLAENLRAVLGRLRDGEPRKGDMFNGQHFWETLGHSIKATSQEATKLSLAFTKPPLPSEEGSQKLCDGLLNAILAAATVYYSLPKEQGITLRKTVREAIADVIEGTIQLVEVILSSRIQSLSQAQLVSTGSVWEACDQWEKLPKDNLAAVQVIVSGYLDVVKDAIEEVEQAQTDGEDPFSDIPEDDEIGARGNQDTYWSEADRRLMAPCLGLMKASKACLKKVIGAIKAHGKADTAEHVAQLDDLVDVTQEVSPSVDELALSMYPPMNHATVRLNAAKLSSVLKKVLAITRSSHVCPEAESTWIQFLDSAVDHNMQKTKNLTQGAL</sequence>
<evidence type="ECO:0000250" key="1"/>
<evidence type="ECO:0000256" key="2">
    <source>
        <dbReference type="SAM" id="MobiDB-lite"/>
    </source>
</evidence>
<evidence type="ECO:0000305" key="3"/>
<gene>
    <name type="primary">ccndbp1</name>
</gene>
<keyword id="KW-0131">Cell cycle</keyword>
<keyword id="KW-0963">Cytoplasm</keyword>
<keyword id="KW-0539">Nucleus</keyword>
<keyword id="KW-1185">Reference proteome</keyword>
<name>CCDB1_XENLA</name>
<dbReference type="EMBL" id="BC085082">
    <property type="protein sequence ID" value="AAH85082.1"/>
    <property type="status" value="ALT_INIT"/>
    <property type="molecule type" value="mRNA"/>
</dbReference>
<dbReference type="EMBL" id="BC108841">
    <property type="protein sequence ID" value="AAI08842.1"/>
    <property type="molecule type" value="mRNA"/>
</dbReference>
<dbReference type="SMR" id="Q5U4I3"/>
<dbReference type="DNASU" id="495493"/>
<dbReference type="GeneID" id="495493"/>
<dbReference type="KEGG" id="xla:495493"/>
<dbReference type="AGR" id="Xenbase:XB-GENE-922606"/>
<dbReference type="CTD" id="495493"/>
<dbReference type="Xenbase" id="XB-GENE-922606">
    <property type="gene designation" value="ccndbp1.S"/>
</dbReference>
<dbReference type="OMA" id="HEATKFC"/>
<dbReference type="OrthoDB" id="41588at2759"/>
<dbReference type="Proteomes" id="UP000186698">
    <property type="component" value="Chromosome 9_10S"/>
</dbReference>
<dbReference type="Bgee" id="495493">
    <property type="expression patterns" value="Expressed in muscle tissue and 19 other cell types or tissues"/>
</dbReference>
<dbReference type="GO" id="GO:0005737">
    <property type="term" value="C:cytoplasm"/>
    <property type="evidence" value="ECO:0007669"/>
    <property type="project" value="UniProtKB-SubCell"/>
</dbReference>
<dbReference type="GO" id="GO:0005634">
    <property type="term" value="C:nucleus"/>
    <property type="evidence" value="ECO:0000318"/>
    <property type="project" value="GO_Central"/>
</dbReference>
<dbReference type="FunFam" id="1.20.1410.10:FF:000005">
    <property type="entry name" value="cyclin-D1-binding protein 1"/>
    <property type="match status" value="1"/>
</dbReference>
<dbReference type="FunFam" id="1.20.1420.10:FF:000008">
    <property type="entry name" value="Cyclin-D1-binding protein 1 homolog"/>
    <property type="match status" value="1"/>
</dbReference>
<dbReference type="Gene3D" id="1.20.1410.10">
    <property type="entry name" value="I/LWEQ domain"/>
    <property type="match status" value="1"/>
</dbReference>
<dbReference type="Gene3D" id="1.20.1420.10">
    <property type="entry name" value="Talin, central domain"/>
    <property type="match status" value="1"/>
</dbReference>
<dbReference type="InterPro" id="IPR026907">
    <property type="entry name" value="GCIP-like"/>
</dbReference>
<dbReference type="InterPro" id="IPR049317">
    <property type="entry name" value="GCIP-like_N"/>
</dbReference>
<dbReference type="InterPro" id="IPR049318">
    <property type="entry name" value="GCIP_C"/>
</dbReference>
<dbReference type="PANTHER" id="PTHR15492">
    <property type="entry name" value="CYCLIN D1-BINDING PROTEIN 1"/>
    <property type="match status" value="1"/>
</dbReference>
<dbReference type="PANTHER" id="PTHR15492:SF1">
    <property type="entry name" value="CYCLIN-D1-BINDING PROTEIN 1"/>
    <property type="match status" value="1"/>
</dbReference>
<dbReference type="Pfam" id="PF20936">
    <property type="entry name" value="GCIP_C"/>
    <property type="match status" value="1"/>
</dbReference>
<dbReference type="Pfam" id="PF13324">
    <property type="entry name" value="GCIP_N"/>
    <property type="match status" value="1"/>
</dbReference>